<organism>
    <name type="scientific">Nitrosococcus oceani (strain ATCC 19707 / BCRC 17464 / JCM 30415 / NCIMB 11848 / C-107)</name>
    <dbReference type="NCBI Taxonomy" id="323261"/>
    <lineage>
        <taxon>Bacteria</taxon>
        <taxon>Pseudomonadati</taxon>
        <taxon>Pseudomonadota</taxon>
        <taxon>Gammaproteobacteria</taxon>
        <taxon>Chromatiales</taxon>
        <taxon>Chromatiaceae</taxon>
        <taxon>Nitrosococcus</taxon>
    </lineage>
</organism>
<evidence type="ECO:0000255" key="1">
    <source>
        <dbReference type="HAMAP-Rule" id="MF_01366"/>
    </source>
</evidence>
<evidence type="ECO:0000305" key="2"/>
<keyword id="KW-1185">Reference proteome</keyword>
<keyword id="KW-0687">Ribonucleoprotein</keyword>
<keyword id="KW-0689">Ribosomal protein</keyword>
<feature type="chain" id="PRO_0000261756" description="Large ribosomal subunit protein uL13">
    <location>
        <begin position="1"/>
        <end position="142"/>
    </location>
</feature>
<reference key="1">
    <citation type="journal article" date="2006" name="Appl. Environ. Microbiol.">
        <title>Complete genome sequence of the marine, chemolithoautotrophic, ammonia-oxidizing bacterium Nitrosococcus oceani ATCC 19707.</title>
        <authorList>
            <person name="Klotz M.G."/>
            <person name="Arp D.J."/>
            <person name="Chain P.S.G."/>
            <person name="El-Sheikh A.F."/>
            <person name="Hauser L.J."/>
            <person name="Hommes N.G."/>
            <person name="Larimer F.W."/>
            <person name="Malfatti S.A."/>
            <person name="Norton J.M."/>
            <person name="Poret-Peterson A.T."/>
            <person name="Vergez L.M."/>
            <person name="Ward B.B."/>
        </authorList>
    </citation>
    <scope>NUCLEOTIDE SEQUENCE [LARGE SCALE GENOMIC DNA]</scope>
    <source>
        <strain>ATCC 19707 / BCRC 17464 / JCM 30415 / NCIMB 11848 / C-107</strain>
    </source>
</reference>
<accession>Q3J7B4</accession>
<comment type="function">
    <text evidence="1">This protein is one of the early assembly proteins of the 50S ribosomal subunit, although it is not seen to bind rRNA by itself. It is important during the early stages of 50S assembly.</text>
</comment>
<comment type="subunit">
    <text evidence="1">Part of the 50S ribosomal subunit.</text>
</comment>
<comment type="similarity">
    <text evidence="1">Belongs to the universal ribosomal protein uL13 family.</text>
</comment>
<sequence>MKTFSAKPKEVRRDWYLVDANGVTLGRLASEIARRLRGKHKAIYTPHIDTGDYIVVVNAEKIRATGKKMAQKHYYRHSGYPGGIKSLTLEKLLERAPERAIELAVKGMLPKNPLGRAMFRKLNVYGGSNHPHIAQQPQPLKI</sequence>
<protein>
    <recommendedName>
        <fullName evidence="1">Large ribosomal subunit protein uL13</fullName>
    </recommendedName>
    <alternativeName>
        <fullName evidence="2">50S ribosomal protein L13</fullName>
    </alternativeName>
</protein>
<gene>
    <name evidence="1" type="primary">rplM</name>
    <name type="ordered locus">Noc_2836</name>
</gene>
<dbReference type="EMBL" id="CP000127">
    <property type="protein sequence ID" value="ABA59282.1"/>
    <property type="molecule type" value="Genomic_DNA"/>
</dbReference>
<dbReference type="RefSeq" id="WP_002812841.1">
    <property type="nucleotide sequence ID" value="NC_007484.1"/>
</dbReference>
<dbReference type="SMR" id="Q3J7B4"/>
<dbReference type="FunCoup" id="Q3J7B4">
    <property type="interactions" value="689"/>
</dbReference>
<dbReference type="STRING" id="323261.Noc_2836"/>
<dbReference type="KEGG" id="noc:Noc_2836"/>
<dbReference type="eggNOG" id="COG0102">
    <property type="taxonomic scope" value="Bacteria"/>
</dbReference>
<dbReference type="HOGENOM" id="CLU_082184_2_2_6"/>
<dbReference type="InParanoid" id="Q3J7B4"/>
<dbReference type="Proteomes" id="UP000006838">
    <property type="component" value="Chromosome"/>
</dbReference>
<dbReference type="GO" id="GO:0022625">
    <property type="term" value="C:cytosolic large ribosomal subunit"/>
    <property type="evidence" value="ECO:0007669"/>
    <property type="project" value="TreeGrafter"/>
</dbReference>
<dbReference type="GO" id="GO:0003729">
    <property type="term" value="F:mRNA binding"/>
    <property type="evidence" value="ECO:0007669"/>
    <property type="project" value="TreeGrafter"/>
</dbReference>
<dbReference type="GO" id="GO:0003735">
    <property type="term" value="F:structural constituent of ribosome"/>
    <property type="evidence" value="ECO:0007669"/>
    <property type="project" value="InterPro"/>
</dbReference>
<dbReference type="GO" id="GO:0017148">
    <property type="term" value="P:negative regulation of translation"/>
    <property type="evidence" value="ECO:0007669"/>
    <property type="project" value="TreeGrafter"/>
</dbReference>
<dbReference type="GO" id="GO:0006412">
    <property type="term" value="P:translation"/>
    <property type="evidence" value="ECO:0007669"/>
    <property type="project" value="UniProtKB-UniRule"/>
</dbReference>
<dbReference type="CDD" id="cd00392">
    <property type="entry name" value="Ribosomal_L13"/>
    <property type="match status" value="1"/>
</dbReference>
<dbReference type="FunFam" id="3.90.1180.10:FF:000001">
    <property type="entry name" value="50S ribosomal protein L13"/>
    <property type="match status" value="1"/>
</dbReference>
<dbReference type="Gene3D" id="3.90.1180.10">
    <property type="entry name" value="Ribosomal protein L13"/>
    <property type="match status" value="1"/>
</dbReference>
<dbReference type="HAMAP" id="MF_01366">
    <property type="entry name" value="Ribosomal_uL13"/>
    <property type="match status" value="1"/>
</dbReference>
<dbReference type="InterPro" id="IPR005822">
    <property type="entry name" value="Ribosomal_uL13"/>
</dbReference>
<dbReference type="InterPro" id="IPR005823">
    <property type="entry name" value="Ribosomal_uL13_bac-type"/>
</dbReference>
<dbReference type="InterPro" id="IPR023563">
    <property type="entry name" value="Ribosomal_uL13_CS"/>
</dbReference>
<dbReference type="InterPro" id="IPR036899">
    <property type="entry name" value="Ribosomal_uL13_sf"/>
</dbReference>
<dbReference type="NCBIfam" id="TIGR01066">
    <property type="entry name" value="rplM_bact"/>
    <property type="match status" value="1"/>
</dbReference>
<dbReference type="PANTHER" id="PTHR11545:SF2">
    <property type="entry name" value="LARGE RIBOSOMAL SUBUNIT PROTEIN UL13M"/>
    <property type="match status" value="1"/>
</dbReference>
<dbReference type="PANTHER" id="PTHR11545">
    <property type="entry name" value="RIBOSOMAL PROTEIN L13"/>
    <property type="match status" value="1"/>
</dbReference>
<dbReference type="Pfam" id="PF00572">
    <property type="entry name" value="Ribosomal_L13"/>
    <property type="match status" value="1"/>
</dbReference>
<dbReference type="PIRSF" id="PIRSF002181">
    <property type="entry name" value="Ribosomal_L13"/>
    <property type="match status" value="1"/>
</dbReference>
<dbReference type="SUPFAM" id="SSF52161">
    <property type="entry name" value="Ribosomal protein L13"/>
    <property type="match status" value="1"/>
</dbReference>
<dbReference type="PROSITE" id="PS00783">
    <property type="entry name" value="RIBOSOMAL_L13"/>
    <property type="match status" value="1"/>
</dbReference>
<proteinExistence type="inferred from homology"/>
<name>RL13_NITOC</name>